<reference key="1">
    <citation type="journal article" date="2002" name="Nat. Biotechnol.">
        <title>Genome sequence of the dissimilatory metal ion-reducing bacterium Shewanella oneidensis.</title>
        <authorList>
            <person name="Heidelberg J.F."/>
            <person name="Paulsen I.T."/>
            <person name="Nelson K.E."/>
            <person name="Gaidos E.J."/>
            <person name="Nelson W.C."/>
            <person name="Read T.D."/>
            <person name="Eisen J.A."/>
            <person name="Seshadri R."/>
            <person name="Ward N.L."/>
            <person name="Methe B.A."/>
            <person name="Clayton R.A."/>
            <person name="Meyer T."/>
            <person name="Tsapin A."/>
            <person name="Scott J."/>
            <person name="Beanan M.J."/>
            <person name="Brinkac L.M."/>
            <person name="Daugherty S.C."/>
            <person name="DeBoy R.T."/>
            <person name="Dodson R.J."/>
            <person name="Durkin A.S."/>
            <person name="Haft D.H."/>
            <person name="Kolonay J.F."/>
            <person name="Madupu R."/>
            <person name="Peterson J.D."/>
            <person name="Umayam L.A."/>
            <person name="White O."/>
            <person name="Wolf A.M."/>
            <person name="Vamathevan J.J."/>
            <person name="Weidman J.F."/>
            <person name="Impraim M."/>
            <person name="Lee K."/>
            <person name="Berry K.J."/>
            <person name="Lee C."/>
            <person name="Mueller J."/>
            <person name="Khouri H.M."/>
            <person name="Gill J."/>
            <person name="Utterback T.R."/>
            <person name="McDonald L.A."/>
            <person name="Feldblyum T.V."/>
            <person name="Smith H.O."/>
            <person name="Venter J.C."/>
            <person name="Nealson K.H."/>
            <person name="Fraser C.M."/>
        </authorList>
    </citation>
    <scope>NUCLEOTIDE SEQUENCE [LARGE SCALE GENOMIC DNA]</scope>
    <source>
        <strain>ATCC 700550 / JCM 31522 / CIP 106686 / LMG 19005 / NCIMB 14063 / MR-1</strain>
    </source>
</reference>
<comment type="function">
    <text evidence="1">Catalyzes the reversible transfer of the terminal phosphate group between ATP and AMP. Plays an important role in cellular energy homeostasis and in adenine nucleotide metabolism.</text>
</comment>
<comment type="catalytic activity">
    <reaction evidence="1">
        <text>AMP + ATP = 2 ADP</text>
        <dbReference type="Rhea" id="RHEA:12973"/>
        <dbReference type="ChEBI" id="CHEBI:30616"/>
        <dbReference type="ChEBI" id="CHEBI:456215"/>
        <dbReference type="ChEBI" id="CHEBI:456216"/>
        <dbReference type="EC" id="2.7.4.3"/>
    </reaction>
</comment>
<comment type="pathway">
    <text evidence="1">Purine metabolism; AMP biosynthesis via salvage pathway; AMP from ADP: step 1/1.</text>
</comment>
<comment type="subunit">
    <text evidence="1">Monomer.</text>
</comment>
<comment type="subcellular location">
    <subcellularLocation>
        <location evidence="1">Cytoplasm</location>
    </subcellularLocation>
</comment>
<comment type="domain">
    <text evidence="1">Consists of three domains, a large central CORE domain and two small peripheral domains, NMPbind and LID, which undergo movements during catalysis. The LID domain closes over the site of phosphoryl transfer upon ATP binding. Assembling and dissambling the active center during each catalytic cycle provides an effective means to prevent ATP hydrolysis.</text>
</comment>
<comment type="similarity">
    <text evidence="1">Belongs to the adenylate kinase family.</text>
</comment>
<accession>Q8EFF5</accession>
<sequence>MRIILLGAPGAGKGTQAQFIMEQYGIPQISTGDMLRAAVKAGTPLGLEAKKVMDAGQLVSDDLIIGLVKERIAQDDCAKGFLLDGFPRTIPQADAMAANGISIDHVIEIDVPDEEIVKRMSGRRVHPGSGRVYHVVFNPPKVEGKDDVTGEDLAIRPDDEEATVRKRLGIYHEQTKPLVEYYGKVAAAGNTQYHKFDGTQSVAAVSEQLASVLK</sequence>
<feature type="chain" id="PRO_0000158843" description="Adenylate kinase">
    <location>
        <begin position="1"/>
        <end position="214"/>
    </location>
</feature>
<feature type="region of interest" description="NMP" evidence="1">
    <location>
        <begin position="30"/>
        <end position="59"/>
    </location>
</feature>
<feature type="region of interest" description="LID" evidence="1">
    <location>
        <begin position="122"/>
        <end position="159"/>
    </location>
</feature>
<feature type="binding site" evidence="1">
    <location>
        <begin position="10"/>
        <end position="15"/>
    </location>
    <ligand>
        <name>ATP</name>
        <dbReference type="ChEBI" id="CHEBI:30616"/>
    </ligand>
</feature>
<feature type="binding site" evidence="1">
    <location>
        <position position="31"/>
    </location>
    <ligand>
        <name>AMP</name>
        <dbReference type="ChEBI" id="CHEBI:456215"/>
    </ligand>
</feature>
<feature type="binding site" evidence="1">
    <location>
        <position position="36"/>
    </location>
    <ligand>
        <name>AMP</name>
        <dbReference type="ChEBI" id="CHEBI:456215"/>
    </ligand>
</feature>
<feature type="binding site" evidence="1">
    <location>
        <begin position="57"/>
        <end position="59"/>
    </location>
    <ligand>
        <name>AMP</name>
        <dbReference type="ChEBI" id="CHEBI:456215"/>
    </ligand>
</feature>
<feature type="binding site" evidence="1">
    <location>
        <begin position="85"/>
        <end position="88"/>
    </location>
    <ligand>
        <name>AMP</name>
        <dbReference type="ChEBI" id="CHEBI:456215"/>
    </ligand>
</feature>
<feature type="binding site" evidence="1">
    <location>
        <position position="92"/>
    </location>
    <ligand>
        <name>AMP</name>
        <dbReference type="ChEBI" id="CHEBI:456215"/>
    </ligand>
</feature>
<feature type="binding site" evidence="1">
    <location>
        <position position="123"/>
    </location>
    <ligand>
        <name>ATP</name>
        <dbReference type="ChEBI" id="CHEBI:30616"/>
    </ligand>
</feature>
<feature type="binding site" evidence="1">
    <location>
        <begin position="132"/>
        <end position="133"/>
    </location>
    <ligand>
        <name>ATP</name>
        <dbReference type="ChEBI" id="CHEBI:30616"/>
    </ligand>
</feature>
<feature type="binding site" evidence="1">
    <location>
        <position position="156"/>
    </location>
    <ligand>
        <name>AMP</name>
        <dbReference type="ChEBI" id="CHEBI:456215"/>
    </ligand>
</feature>
<feature type="binding site" evidence="1">
    <location>
        <position position="167"/>
    </location>
    <ligand>
        <name>AMP</name>
        <dbReference type="ChEBI" id="CHEBI:456215"/>
    </ligand>
</feature>
<feature type="binding site" evidence="1">
    <location>
        <position position="200"/>
    </location>
    <ligand>
        <name>ATP</name>
        <dbReference type="ChEBI" id="CHEBI:30616"/>
    </ligand>
</feature>
<protein>
    <recommendedName>
        <fullName evidence="1">Adenylate kinase</fullName>
        <shortName evidence="1">AK</shortName>
        <ecNumber evidence="1">2.7.4.3</ecNumber>
    </recommendedName>
    <alternativeName>
        <fullName evidence="1">ATP-AMP transphosphorylase</fullName>
    </alternativeName>
    <alternativeName>
        <fullName evidence="1">ATP:AMP phosphotransferase</fullName>
    </alternativeName>
    <alternativeName>
        <fullName evidence="1">Adenylate monophosphate kinase</fullName>
    </alternativeName>
</protein>
<organism>
    <name type="scientific">Shewanella oneidensis (strain ATCC 700550 / JCM 31522 / CIP 106686 / LMG 19005 / NCIMB 14063 / MR-1)</name>
    <dbReference type="NCBI Taxonomy" id="211586"/>
    <lineage>
        <taxon>Bacteria</taxon>
        <taxon>Pseudomonadati</taxon>
        <taxon>Pseudomonadota</taxon>
        <taxon>Gammaproteobacteria</taxon>
        <taxon>Alteromonadales</taxon>
        <taxon>Shewanellaceae</taxon>
        <taxon>Shewanella</taxon>
    </lineage>
</organism>
<dbReference type="EC" id="2.7.4.3" evidence="1"/>
<dbReference type="EMBL" id="AE014299">
    <property type="protein sequence ID" value="AAN55068.1"/>
    <property type="molecule type" value="Genomic_DNA"/>
</dbReference>
<dbReference type="RefSeq" id="NP_717624.1">
    <property type="nucleotide sequence ID" value="NC_004347.2"/>
</dbReference>
<dbReference type="RefSeq" id="WP_011072102.1">
    <property type="nucleotide sequence ID" value="NZ_CP053946.1"/>
</dbReference>
<dbReference type="SMR" id="Q8EFF5"/>
<dbReference type="STRING" id="211586.SO_2018"/>
<dbReference type="PaxDb" id="211586-SO_2018"/>
<dbReference type="KEGG" id="son:SO_2018"/>
<dbReference type="PATRIC" id="fig|211586.12.peg.1937"/>
<dbReference type="eggNOG" id="COG0563">
    <property type="taxonomic scope" value="Bacteria"/>
</dbReference>
<dbReference type="HOGENOM" id="CLU_032354_1_2_6"/>
<dbReference type="OrthoDB" id="9805030at2"/>
<dbReference type="PhylomeDB" id="Q8EFF5"/>
<dbReference type="BioCyc" id="SONE211586:G1GMP-1860-MONOMER"/>
<dbReference type="UniPathway" id="UPA00588">
    <property type="reaction ID" value="UER00649"/>
</dbReference>
<dbReference type="Proteomes" id="UP000008186">
    <property type="component" value="Chromosome"/>
</dbReference>
<dbReference type="GO" id="GO:0005737">
    <property type="term" value="C:cytoplasm"/>
    <property type="evidence" value="ECO:0000318"/>
    <property type="project" value="GO_Central"/>
</dbReference>
<dbReference type="GO" id="GO:0005829">
    <property type="term" value="C:cytosol"/>
    <property type="evidence" value="ECO:0000318"/>
    <property type="project" value="GO_Central"/>
</dbReference>
<dbReference type="GO" id="GO:0004017">
    <property type="term" value="F:adenylate kinase activity"/>
    <property type="evidence" value="ECO:0000318"/>
    <property type="project" value="GO_Central"/>
</dbReference>
<dbReference type="GO" id="GO:0005524">
    <property type="term" value="F:ATP binding"/>
    <property type="evidence" value="ECO:0007669"/>
    <property type="project" value="UniProtKB-UniRule"/>
</dbReference>
<dbReference type="GO" id="GO:0004550">
    <property type="term" value="F:nucleoside diphosphate kinase activity"/>
    <property type="evidence" value="ECO:0000318"/>
    <property type="project" value="GO_Central"/>
</dbReference>
<dbReference type="GO" id="GO:0044209">
    <property type="term" value="P:AMP salvage"/>
    <property type="evidence" value="ECO:0007669"/>
    <property type="project" value="UniProtKB-UniRule"/>
</dbReference>
<dbReference type="GO" id="GO:0009132">
    <property type="term" value="P:nucleoside diphosphate metabolic process"/>
    <property type="evidence" value="ECO:0000318"/>
    <property type="project" value="GO_Central"/>
</dbReference>
<dbReference type="GO" id="GO:0009123">
    <property type="term" value="P:nucleoside monophosphate metabolic process"/>
    <property type="evidence" value="ECO:0000318"/>
    <property type="project" value="GO_Central"/>
</dbReference>
<dbReference type="CDD" id="cd01428">
    <property type="entry name" value="ADK"/>
    <property type="match status" value="1"/>
</dbReference>
<dbReference type="FunFam" id="3.40.50.300:FF:000106">
    <property type="entry name" value="Adenylate kinase mitochondrial"/>
    <property type="match status" value="1"/>
</dbReference>
<dbReference type="Gene3D" id="3.40.50.300">
    <property type="entry name" value="P-loop containing nucleotide triphosphate hydrolases"/>
    <property type="match status" value="1"/>
</dbReference>
<dbReference type="HAMAP" id="MF_00235">
    <property type="entry name" value="Adenylate_kinase_Adk"/>
    <property type="match status" value="1"/>
</dbReference>
<dbReference type="InterPro" id="IPR006259">
    <property type="entry name" value="Adenyl_kin_sub"/>
</dbReference>
<dbReference type="InterPro" id="IPR000850">
    <property type="entry name" value="Adenylat/UMP-CMP_kin"/>
</dbReference>
<dbReference type="InterPro" id="IPR033690">
    <property type="entry name" value="Adenylat_kinase_CS"/>
</dbReference>
<dbReference type="InterPro" id="IPR007862">
    <property type="entry name" value="Adenylate_kinase_lid-dom"/>
</dbReference>
<dbReference type="InterPro" id="IPR027417">
    <property type="entry name" value="P-loop_NTPase"/>
</dbReference>
<dbReference type="NCBIfam" id="TIGR01351">
    <property type="entry name" value="adk"/>
    <property type="match status" value="1"/>
</dbReference>
<dbReference type="NCBIfam" id="NF001379">
    <property type="entry name" value="PRK00279.1-1"/>
    <property type="match status" value="1"/>
</dbReference>
<dbReference type="NCBIfam" id="NF001380">
    <property type="entry name" value="PRK00279.1-2"/>
    <property type="match status" value="1"/>
</dbReference>
<dbReference type="NCBIfam" id="NF001381">
    <property type="entry name" value="PRK00279.1-3"/>
    <property type="match status" value="1"/>
</dbReference>
<dbReference type="NCBIfam" id="NF011100">
    <property type="entry name" value="PRK14527.1"/>
    <property type="match status" value="1"/>
</dbReference>
<dbReference type="PANTHER" id="PTHR23359">
    <property type="entry name" value="NUCLEOTIDE KINASE"/>
    <property type="match status" value="1"/>
</dbReference>
<dbReference type="Pfam" id="PF00406">
    <property type="entry name" value="ADK"/>
    <property type="match status" value="1"/>
</dbReference>
<dbReference type="Pfam" id="PF05191">
    <property type="entry name" value="ADK_lid"/>
    <property type="match status" value="1"/>
</dbReference>
<dbReference type="PRINTS" id="PR00094">
    <property type="entry name" value="ADENYLTKNASE"/>
</dbReference>
<dbReference type="SUPFAM" id="SSF52540">
    <property type="entry name" value="P-loop containing nucleoside triphosphate hydrolases"/>
    <property type="match status" value="1"/>
</dbReference>
<dbReference type="PROSITE" id="PS00113">
    <property type="entry name" value="ADENYLATE_KINASE"/>
    <property type="match status" value="1"/>
</dbReference>
<name>KAD_SHEON</name>
<proteinExistence type="inferred from homology"/>
<keyword id="KW-0067">ATP-binding</keyword>
<keyword id="KW-0963">Cytoplasm</keyword>
<keyword id="KW-0418">Kinase</keyword>
<keyword id="KW-0545">Nucleotide biosynthesis</keyword>
<keyword id="KW-0547">Nucleotide-binding</keyword>
<keyword id="KW-1185">Reference proteome</keyword>
<keyword id="KW-0808">Transferase</keyword>
<gene>
    <name evidence="1" type="primary">adk</name>
    <name type="ordered locus">SO_2018</name>
</gene>
<evidence type="ECO:0000255" key="1">
    <source>
        <dbReference type="HAMAP-Rule" id="MF_00235"/>
    </source>
</evidence>